<reference key="1">
    <citation type="journal article" date="1999" name="J. Biol. Chem.">
        <title>The Escherichia coli ssuEADCB gene cluster is required for the utilization of sulfur from aliphatic sulfonates and is regulated by the transcriptional activator Cbl.</title>
        <authorList>
            <person name="Van der Ploeg J.R."/>
            <person name="Iwanicka-Nowicka R."/>
            <person name="Bykowski T."/>
            <person name="Hryniewicz M.M."/>
            <person name="Leisinger T."/>
        </authorList>
    </citation>
    <scope>NUCLEOTIDE SEQUENCE [GENOMIC DNA]</scope>
    <source>
        <strain>K12 / MC4100 / ATCC 35695 / DSM 6574</strain>
    </source>
</reference>
<reference key="2">
    <citation type="journal article" date="1996" name="DNA Res.">
        <title>A 718-kb DNA sequence of the Escherichia coli K-12 genome corresponding to the 12.7-28.0 min region on the linkage map.</title>
        <authorList>
            <person name="Oshima T."/>
            <person name="Aiba H."/>
            <person name="Baba T."/>
            <person name="Fujita K."/>
            <person name="Hayashi K."/>
            <person name="Honjo A."/>
            <person name="Ikemoto K."/>
            <person name="Inada T."/>
            <person name="Itoh T."/>
            <person name="Kajihara M."/>
            <person name="Kanai K."/>
            <person name="Kashimoto K."/>
            <person name="Kimura S."/>
            <person name="Kitagawa M."/>
            <person name="Makino K."/>
            <person name="Masuda S."/>
            <person name="Miki T."/>
            <person name="Mizobuchi K."/>
            <person name="Mori H."/>
            <person name="Motomura K."/>
            <person name="Nakamura Y."/>
            <person name="Nashimoto H."/>
            <person name="Nishio Y."/>
            <person name="Saito N."/>
            <person name="Sampei G."/>
            <person name="Seki Y."/>
            <person name="Tagami H."/>
            <person name="Takemoto K."/>
            <person name="Wada C."/>
            <person name="Yamamoto Y."/>
            <person name="Yano M."/>
            <person name="Horiuchi T."/>
        </authorList>
    </citation>
    <scope>NUCLEOTIDE SEQUENCE [LARGE SCALE GENOMIC DNA]</scope>
    <source>
        <strain>K12 / W3110 / ATCC 27325 / DSM 5911</strain>
    </source>
</reference>
<reference key="3">
    <citation type="journal article" date="1997" name="Science">
        <title>The complete genome sequence of Escherichia coli K-12.</title>
        <authorList>
            <person name="Blattner F.R."/>
            <person name="Plunkett G. III"/>
            <person name="Bloch C.A."/>
            <person name="Perna N.T."/>
            <person name="Burland V."/>
            <person name="Riley M."/>
            <person name="Collado-Vides J."/>
            <person name="Glasner J.D."/>
            <person name="Rode C.K."/>
            <person name="Mayhew G.F."/>
            <person name="Gregor J."/>
            <person name="Davis N.W."/>
            <person name="Kirkpatrick H.A."/>
            <person name="Goeden M.A."/>
            <person name="Rose D.J."/>
            <person name="Mau B."/>
            <person name="Shao Y."/>
        </authorList>
    </citation>
    <scope>NUCLEOTIDE SEQUENCE [LARGE SCALE GENOMIC DNA]</scope>
    <source>
        <strain>K12 / MG1655 / ATCC 47076</strain>
    </source>
</reference>
<reference key="4">
    <citation type="journal article" date="2006" name="Mol. Syst. Biol.">
        <title>Highly accurate genome sequences of Escherichia coli K-12 strains MG1655 and W3110.</title>
        <authorList>
            <person name="Hayashi K."/>
            <person name="Morooka N."/>
            <person name="Yamamoto Y."/>
            <person name="Fujita K."/>
            <person name="Isono K."/>
            <person name="Choi S."/>
            <person name="Ohtsubo E."/>
            <person name="Baba T."/>
            <person name="Wanner B.L."/>
            <person name="Mori H."/>
            <person name="Horiuchi T."/>
        </authorList>
    </citation>
    <scope>NUCLEOTIDE SEQUENCE [LARGE SCALE GENOMIC DNA]</scope>
    <source>
        <strain>K12 / W3110 / ATCC 27325 / DSM 5911</strain>
    </source>
</reference>
<reference key="5">
    <citation type="journal article" date="1996" name="Eur. J. Biochem.">
        <title>Analysis of global responses by protein and peptide fingerprinting of proteins isolated by two-dimensional gel electrophoresis. Application to the sulfate-starvation response of Escherichia coli.</title>
        <authorList>
            <person name="Quadroni M."/>
            <person name="Staudenmann W."/>
            <person name="Kertesz M.A."/>
            <person name="James P."/>
        </authorList>
    </citation>
    <scope>PROTEIN SEQUENCE OF 1-14</scope>
    <source>
        <strain>K12 / MC4100 / ATCC 35695 / DSM 6574</strain>
    </source>
</reference>
<reference key="6">
    <citation type="journal article" date="1999" name="J. Biol. Chem.">
        <title>Characterization of a two-component alkanesulfonate monooxygenase from Escherichia coli.</title>
        <authorList>
            <person name="Eichhorn E."/>
            <person name="van der Ploeg J.R."/>
            <person name="Leisinger T."/>
        </authorList>
    </citation>
    <scope>CHARACTERIZATION</scope>
</reference>
<evidence type="ECO:0000305" key="1"/>
<evidence type="ECO:0007829" key="2">
    <source>
        <dbReference type="PDB" id="6DQP"/>
    </source>
</evidence>
<sequence length="191" mass="21253">MRVITLAGSPRFPSRSSSLLEYAREKLNGLDVEVYHWNLQNFAPEDLLYARFDSPALKTFTEQLQQADGLIVATPVYKAAYSGALKTLLDLLPERALQGKVVLPLATGGTVAHLLAVDYALKPVLSALKAQEILHGVFADDSQVIDYHHRPQFTPNLQTRLDTALETFWQALHRRDVQVPDLLSLRGNAHA</sequence>
<comment type="function">
    <text>Catalyzes an NADPH-dependent reduction of FMN, but is also able to reduce FAD or riboflavin.</text>
</comment>
<comment type="catalytic activity">
    <reaction>
        <text>FMNH2 + NADP(+) = FMN + NADPH + 2 H(+)</text>
        <dbReference type="Rhea" id="RHEA:21624"/>
        <dbReference type="ChEBI" id="CHEBI:15378"/>
        <dbReference type="ChEBI" id="CHEBI:57618"/>
        <dbReference type="ChEBI" id="CHEBI:57783"/>
        <dbReference type="ChEBI" id="CHEBI:58210"/>
        <dbReference type="ChEBI" id="CHEBI:58349"/>
        <dbReference type="EC" id="1.5.1.38"/>
    </reaction>
</comment>
<comment type="subunit">
    <text>Homodimer.</text>
</comment>
<comment type="interaction">
    <interactant intactId="EBI-1121047">
        <id>P80644</id>
    </interactant>
    <interactant intactId="EBI-561637">
        <id>P80645</id>
        <label>ssuD</label>
    </interactant>
    <organismsDiffer>false</organismsDiffer>
    <experiments>2</experiments>
</comment>
<comment type="induction">
    <text>Repressed by sulfate or cysteine.</text>
</comment>
<comment type="similarity">
    <text evidence="1">Belongs to the SsuE family.</text>
</comment>
<keyword id="KW-0002">3D-structure</keyword>
<keyword id="KW-0903">Direct protein sequencing</keyword>
<keyword id="KW-0285">Flavoprotein</keyword>
<keyword id="KW-0288">FMN</keyword>
<keyword id="KW-0521">NADP</keyword>
<keyword id="KW-0560">Oxidoreductase</keyword>
<keyword id="KW-1185">Reference proteome</keyword>
<accession>P80644</accession>
<accession>P75854</accession>
<organism>
    <name type="scientific">Escherichia coli (strain K12)</name>
    <dbReference type="NCBI Taxonomy" id="83333"/>
    <lineage>
        <taxon>Bacteria</taxon>
        <taxon>Pseudomonadati</taxon>
        <taxon>Pseudomonadota</taxon>
        <taxon>Gammaproteobacteria</taxon>
        <taxon>Enterobacterales</taxon>
        <taxon>Enterobacteriaceae</taxon>
        <taxon>Escherichia</taxon>
    </lineage>
</organism>
<protein>
    <recommendedName>
        <fullName>FMN reductase (NADPH)</fullName>
        <ecNumber>1.5.1.38</ecNumber>
    </recommendedName>
    <alternativeName>
        <fullName>FMN reductase</fullName>
    </alternativeName>
    <alternativeName>
        <fullName>Sulfate starvation-induced protein 4</fullName>
        <shortName>SSI4</shortName>
    </alternativeName>
</protein>
<feature type="chain" id="PRO_0000160591" description="FMN reductase (NADPH)">
    <location>
        <begin position="1"/>
        <end position="191"/>
    </location>
</feature>
<feature type="strand" evidence="2">
    <location>
        <begin position="2"/>
        <end position="7"/>
    </location>
</feature>
<feature type="strand" evidence="2">
    <location>
        <begin position="10"/>
        <end position="13"/>
    </location>
</feature>
<feature type="helix" evidence="2">
    <location>
        <begin position="15"/>
        <end position="29"/>
    </location>
</feature>
<feature type="strand" evidence="2">
    <location>
        <begin position="33"/>
        <end position="38"/>
    </location>
</feature>
<feature type="helix" evidence="2">
    <location>
        <begin position="39"/>
        <end position="41"/>
    </location>
</feature>
<feature type="helix" evidence="2">
    <location>
        <begin position="44"/>
        <end position="48"/>
    </location>
</feature>
<feature type="helix" evidence="2">
    <location>
        <begin position="55"/>
        <end position="65"/>
    </location>
</feature>
<feature type="strand" evidence="2">
    <location>
        <begin position="68"/>
        <end position="75"/>
    </location>
</feature>
<feature type="helix" evidence="2">
    <location>
        <begin position="83"/>
        <end position="89"/>
    </location>
</feature>
<feature type="turn" evidence="2">
    <location>
        <begin position="94"/>
        <end position="97"/>
    </location>
</feature>
<feature type="strand" evidence="2">
    <location>
        <begin position="101"/>
        <end position="110"/>
    </location>
</feature>
<feature type="helix" evidence="2">
    <location>
        <begin position="111"/>
        <end position="114"/>
    </location>
</feature>
<feature type="turn" evidence="2">
    <location>
        <begin position="115"/>
        <end position="118"/>
    </location>
</feature>
<feature type="helix" evidence="2">
    <location>
        <begin position="122"/>
        <end position="127"/>
    </location>
</feature>
<feature type="strand" evidence="2">
    <location>
        <begin position="130"/>
        <end position="133"/>
    </location>
</feature>
<feature type="strand" evidence="2">
    <location>
        <begin position="137"/>
        <end position="140"/>
    </location>
</feature>
<feature type="helix" evidence="2">
    <location>
        <begin position="141"/>
        <end position="143"/>
    </location>
</feature>
<feature type="strand" evidence="2">
    <location>
        <begin position="144"/>
        <end position="150"/>
    </location>
</feature>
<feature type="helix" evidence="2">
    <location>
        <begin position="155"/>
        <end position="172"/>
    </location>
</feature>
<proteinExistence type="evidence at protein level"/>
<name>SSUE_ECOLI</name>
<gene>
    <name type="primary">ssuE</name>
    <name type="synonym">ycbP</name>
    <name type="ordered locus">b0937</name>
    <name type="ordered locus">JW0920</name>
</gene>
<dbReference type="EC" id="1.5.1.38"/>
<dbReference type="EMBL" id="AJ237695">
    <property type="protein sequence ID" value="CAB40389.1"/>
    <property type="molecule type" value="Genomic_DNA"/>
</dbReference>
<dbReference type="EMBL" id="U00096">
    <property type="protein sequence ID" value="AAC74023.1"/>
    <property type="molecule type" value="Genomic_DNA"/>
</dbReference>
<dbReference type="EMBL" id="AP009048">
    <property type="protein sequence ID" value="BAA35692.1"/>
    <property type="molecule type" value="Genomic_DNA"/>
</dbReference>
<dbReference type="PIR" id="H64833">
    <property type="entry name" value="H64833"/>
</dbReference>
<dbReference type="RefSeq" id="NP_415457.1">
    <property type="nucleotide sequence ID" value="NC_000913.3"/>
</dbReference>
<dbReference type="RefSeq" id="WP_001263933.1">
    <property type="nucleotide sequence ID" value="NZ_STEB01000006.1"/>
</dbReference>
<dbReference type="PDB" id="4PTY">
    <property type="method" value="X-ray"/>
    <property type="resolution" value="2.10 A"/>
    <property type="chains" value="A/B/C/D=1-191"/>
</dbReference>
<dbReference type="PDB" id="4PTZ">
    <property type="method" value="X-ray"/>
    <property type="resolution" value="1.90 A"/>
    <property type="chains" value="A/B/C/D=1-191"/>
</dbReference>
<dbReference type="PDB" id="4PU0">
    <property type="method" value="X-ray"/>
    <property type="resolution" value="2.30 A"/>
    <property type="chains" value="A/B/C/D=1-191"/>
</dbReference>
<dbReference type="PDB" id="6DQI">
    <property type="method" value="X-ray"/>
    <property type="resolution" value="1.95 A"/>
    <property type="chains" value="A/B=1-191"/>
</dbReference>
<dbReference type="PDB" id="6DQO">
    <property type="method" value="X-ray"/>
    <property type="resolution" value="1.71 A"/>
    <property type="chains" value="A=1-191"/>
</dbReference>
<dbReference type="PDB" id="6DQP">
    <property type="method" value="X-ray"/>
    <property type="resolution" value="1.55 A"/>
    <property type="chains" value="A/B=1-191"/>
</dbReference>
<dbReference type="PDBsum" id="4PTY"/>
<dbReference type="PDBsum" id="4PTZ"/>
<dbReference type="PDBsum" id="4PU0"/>
<dbReference type="PDBsum" id="6DQI"/>
<dbReference type="PDBsum" id="6DQO"/>
<dbReference type="PDBsum" id="6DQP"/>
<dbReference type="SMR" id="P80644"/>
<dbReference type="BioGRID" id="4262118">
    <property type="interactions" value="33"/>
</dbReference>
<dbReference type="BioGRID" id="850311">
    <property type="interactions" value="1"/>
</dbReference>
<dbReference type="ComplexPortal" id="CPX-2118">
    <property type="entry name" value="FMN reductase complex"/>
</dbReference>
<dbReference type="DIP" id="DIP-10929N"/>
<dbReference type="FunCoup" id="P80644">
    <property type="interactions" value="87"/>
</dbReference>
<dbReference type="IntAct" id="P80644">
    <property type="interactions" value="5"/>
</dbReference>
<dbReference type="STRING" id="511145.b0937"/>
<dbReference type="PaxDb" id="511145-b0937"/>
<dbReference type="EnsemblBacteria" id="AAC74023">
    <property type="protein sequence ID" value="AAC74023"/>
    <property type="gene ID" value="b0937"/>
</dbReference>
<dbReference type="GeneID" id="75204028"/>
<dbReference type="GeneID" id="945947"/>
<dbReference type="KEGG" id="ecj:JW0920"/>
<dbReference type="KEGG" id="eco:b0937"/>
<dbReference type="KEGG" id="ecoc:C3026_05750"/>
<dbReference type="PATRIC" id="fig|1411691.4.peg.1337"/>
<dbReference type="EchoBASE" id="EB3472"/>
<dbReference type="eggNOG" id="COG0431">
    <property type="taxonomic scope" value="Bacteria"/>
</dbReference>
<dbReference type="HOGENOM" id="CLU_055322_3_0_6"/>
<dbReference type="InParanoid" id="P80644"/>
<dbReference type="OMA" id="DVEVCHW"/>
<dbReference type="OrthoDB" id="1643408at2"/>
<dbReference type="PhylomeDB" id="P80644"/>
<dbReference type="BioCyc" id="EcoCyc:MONOMER0-146"/>
<dbReference type="BioCyc" id="MetaCyc:MONOMER0-146"/>
<dbReference type="BRENDA" id="1.5.1.38">
    <property type="organism ID" value="2026"/>
</dbReference>
<dbReference type="EvolutionaryTrace" id="P80644"/>
<dbReference type="PRO" id="PR:P80644"/>
<dbReference type="Proteomes" id="UP000000625">
    <property type="component" value="Chromosome"/>
</dbReference>
<dbReference type="GO" id="GO:1990202">
    <property type="term" value="C:FMN reductase complex"/>
    <property type="evidence" value="ECO:0000314"/>
    <property type="project" value="EcoCyc"/>
</dbReference>
<dbReference type="GO" id="GO:0052873">
    <property type="term" value="F:FMN reductase (NADPH) activity"/>
    <property type="evidence" value="ECO:0007669"/>
    <property type="project" value="UniProtKB-EC"/>
</dbReference>
<dbReference type="GO" id="GO:0008752">
    <property type="term" value="F:FMN reductase [NAD(P)H] activity"/>
    <property type="evidence" value="ECO:0000314"/>
    <property type="project" value="EcoCyc"/>
</dbReference>
<dbReference type="GO" id="GO:0042803">
    <property type="term" value="F:protein homodimerization activity"/>
    <property type="evidence" value="ECO:0000314"/>
    <property type="project" value="EcoCyc"/>
</dbReference>
<dbReference type="GO" id="GO:0046306">
    <property type="term" value="P:alkanesulfonate catabolic process"/>
    <property type="evidence" value="ECO:0000314"/>
    <property type="project" value="ComplexPortal"/>
</dbReference>
<dbReference type="GO" id="GO:0009970">
    <property type="term" value="P:cellular response to sulfate starvation"/>
    <property type="evidence" value="ECO:0000270"/>
    <property type="project" value="EcoCyc"/>
</dbReference>
<dbReference type="GO" id="GO:0006974">
    <property type="term" value="P:DNA damage response"/>
    <property type="evidence" value="ECO:0000270"/>
    <property type="project" value="EcoliWiki"/>
</dbReference>
<dbReference type="DisProt" id="DP01735"/>
<dbReference type="FunFam" id="3.40.50.360:FF:000028">
    <property type="entry name" value="NAD(P)H-dependent FMN reductase"/>
    <property type="match status" value="1"/>
</dbReference>
<dbReference type="Gene3D" id="3.40.50.360">
    <property type="match status" value="1"/>
</dbReference>
<dbReference type="InterPro" id="IPR029039">
    <property type="entry name" value="Flavoprotein-like_sf"/>
</dbReference>
<dbReference type="InterPro" id="IPR005025">
    <property type="entry name" value="FMN_Rdtase-like_dom"/>
</dbReference>
<dbReference type="InterPro" id="IPR051814">
    <property type="entry name" value="NAD(P)H-dep_FMN_reductase"/>
</dbReference>
<dbReference type="InterPro" id="IPR020048">
    <property type="entry name" value="NADPH-dep_FMN_reduc_SsuE"/>
</dbReference>
<dbReference type="NCBIfam" id="TIGR03567">
    <property type="entry name" value="FMN_reduc_SsuE"/>
    <property type="match status" value="1"/>
</dbReference>
<dbReference type="NCBIfam" id="NF007859">
    <property type="entry name" value="PRK10569.1"/>
    <property type="match status" value="1"/>
</dbReference>
<dbReference type="PANTHER" id="PTHR43408">
    <property type="entry name" value="FMN REDUCTASE (NADPH)"/>
    <property type="match status" value="1"/>
</dbReference>
<dbReference type="PANTHER" id="PTHR43408:SF1">
    <property type="entry name" value="FMN REDUCTASE (NADPH)"/>
    <property type="match status" value="1"/>
</dbReference>
<dbReference type="Pfam" id="PF03358">
    <property type="entry name" value="FMN_red"/>
    <property type="match status" value="1"/>
</dbReference>
<dbReference type="SUPFAM" id="SSF52218">
    <property type="entry name" value="Flavoproteins"/>
    <property type="match status" value="1"/>
</dbReference>